<proteinExistence type="inferred from homology"/>
<accession>A7MYX4</accession>
<reference key="1">
    <citation type="submission" date="2007-08" db="EMBL/GenBank/DDBJ databases">
        <authorList>
            <consortium name="The Vibrio harveyi Genome Sequencing Project"/>
            <person name="Bassler B."/>
            <person name="Clifton S.W."/>
            <person name="Fulton L."/>
            <person name="Delehaunty K."/>
            <person name="Fronick C."/>
            <person name="Harrison M."/>
            <person name="Markivic C."/>
            <person name="Fulton R."/>
            <person name="Tin-Wollam A.-M."/>
            <person name="Shah N."/>
            <person name="Pepin K."/>
            <person name="Nash W."/>
            <person name="Thiruvilangam P."/>
            <person name="Bhonagiri V."/>
            <person name="Waters C."/>
            <person name="Tu K.C."/>
            <person name="Irgon J."/>
            <person name="Wilson R.K."/>
        </authorList>
    </citation>
    <scope>NUCLEOTIDE SEQUENCE [LARGE SCALE GENOMIC DNA]</scope>
    <source>
        <strain>ATCC BAA-1116 / BB120</strain>
    </source>
</reference>
<name>Y3438_VIBC1</name>
<sequence>MEFEFIRNTLMGEYYVKCSMGHEIVGRWLQEEIGKDPAKIAQVEALIDQAFSSPSQEHRLTGAEISLMIHGDEVLVQENALGHEYEVEMESEFDFYDAESTASCGIEDFCTLIEQWKDFLNI</sequence>
<comment type="similarity">
    <text evidence="1">Belongs to the UPF0231 family.</text>
</comment>
<feature type="chain" id="PRO_1000064373" description="UPF0231 protein VIBHAR_03438">
    <location>
        <begin position="1"/>
        <end position="122"/>
    </location>
</feature>
<evidence type="ECO:0000255" key="1">
    <source>
        <dbReference type="HAMAP-Rule" id="MF_01053"/>
    </source>
</evidence>
<protein>
    <recommendedName>
        <fullName evidence="1">UPF0231 protein VIBHAR_03438</fullName>
    </recommendedName>
</protein>
<organism>
    <name type="scientific">Vibrio campbellii (strain ATCC BAA-1116)</name>
    <dbReference type="NCBI Taxonomy" id="2902295"/>
    <lineage>
        <taxon>Bacteria</taxon>
        <taxon>Pseudomonadati</taxon>
        <taxon>Pseudomonadota</taxon>
        <taxon>Gammaproteobacteria</taxon>
        <taxon>Vibrionales</taxon>
        <taxon>Vibrionaceae</taxon>
        <taxon>Vibrio</taxon>
    </lineage>
</organism>
<dbReference type="EMBL" id="CP000789">
    <property type="protein sequence ID" value="ABU72383.1"/>
    <property type="molecule type" value="Genomic_DNA"/>
</dbReference>
<dbReference type="RefSeq" id="WP_012128853.1">
    <property type="nucleotide sequence ID" value="NC_022269.1"/>
</dbReference>
<dbReference type="KEGG" id="vha:VIBHAR_03438"/>
<dbReference type="PATRIC" id="fig|338187.25.peg.2761"/>
<dbReference type="Proteomes" id="UP000008152">
    <property type="component" value="Chromosome I"/>
</dbReference>
<dbReference type="HAMAP" id="MF_01053">
    <property type="entry name" value="UPF0231"/>
    <property type="match status" value="1"/>
</dbReference>
<dbReference type="InterPro" id="IPR008249">
    <property type="entry name" value="UPF0231"/>
</dbReference>
<dbReference type="NCBIfam" id="NF003579">
    <property type="entry name" value="PRK05248.2-4"/>
    <property type="match status" value="1"/>
</dbReference>
<dbReference type="Pfam" id="PF06062">
    <property type="entry name" value="UPF0231"/>
    <property type="match status" value="1"/>
</dbReference>
<dbReference type="PIRSF" id="PIRSF006287">
    <property type="entry name" value="UCP006287"/>
    <property type="match status" value="1"/>
</dbReference>
<gene>
    <name type="ordered locus">VIBHAR_03438</name>
</gene>